<protein>
    <recommendedName>
        <fullName evidence="1">Deoxyuridine 5'-triphosphate nucleotidohydrolase</fullName>
        <shortName evidence="1">dUTPase</shortName>
        <ecNumber evidence="1">3.6.1.23</ecNumber>
    </recommendedName>
    <alternativeName>
        <fullName evidence="1">dUTP pyrophosphatase</fullName>
    </alternativeName>
</protein>
<proteinExistence type="inferred from homology"/>
<organism>
    <name type="scientific">Encephalitozoon cuniculi (strain GB-M1)</name>
    <name type="common">Microsporidian parasite</name>
    <dbReference type="NCBI Taxonomy" id="284813"/>
    <lineage>
        <taxon>Eukaryota</taxon>
        <taxon>Fungi</taxon>
        <taxon>Fungi incertae sedis</taxon>
        <taxon>Microsporidia</taxon>
        <taxon>Unikaryonidae</taxon>
        <taxon>Encephalitozoon</taxon>
    </lineage>
</organism>
<comment type="function">
    <text evidence="1">Involved in nucleotide metabolism via production of dUMP, the immediate precursor of thymidine nucleotides, and decreases the intracellular concentration of dUTP so that uracil cannot be incorporated into DNA.</text>
</comment>
<comment type="catalytic activity">
    <reaction evidence="1">
        <text>dUTP + H2O = dUMP + diphosphate + H(+)</text>
        <dbReference type="Rhea" id="RHEA:10248"/>
        <dbReference type="ChEBI" id="CHEBI:15377"/>
        <dbReference type="ChEBI" id="CHEBI:15378"/>
        <dbReference type="ChEBI" id="CHEBI:33019"/>
        <dbReference type="ChEBI" id="CHEBI:61555"/>
        <dbReference type="ChEBI" id="CHEBI:246422"/>
        <dbReference type="EC" id="3.6.1.23"/>
    </reaction>
    <physiologicalReaction direction="left-to-right" evidence="1">
        <dbReference type="Rhea" id="RHEA:10249"/>
    </physiologicalReaction>
</comment>
<comment type="cofactor">
    <cofactor evidence="1">
        <name>Mg(2+)</name>
        <dbReference type="ChEBI" id="CHEBI:18420"/>
    </cofactor>
</comment>
<comment type="pathway">
    <text>Pyrimidine metabolism; dUMP biosynthesis; dUMP from dCTP (dUTP route): step 2/2.</text>
</comment>
<comment type="subunit">
    <text evidence="1">Homotrimer.</text>
</comment>
<comment type="similarity">
    <text evidence="2">Belongs to the dUTPase family.</text>
</comment>
<evidence type="ECO:0000250" key="1">
    <source>
        <dbReference type="UniProtKB" id="P33317"/>
    </source>
</evidence>
<evidence type="ECO:0000305" key="2"/>
<feature type="chain" id="PRO_0000182928" description="Deoxyuridine 5'-triphosphate nucleotidohydrolase">
    <location>
        <begin position="1"/>
        <end position="144"/>
    </location>
</feature>
<feature type="binding site" evidence="1">
    <location>
        <position position="66"/>
    </location>
    <ligand>
        <name>dUMP</name>
        <dbReference type="ChEBI" id="CHEBI:246422"/>
    </ligand>
</feature>
<feature type="binding site" evidence="1">
    <location>
        <position position="133"/>
    </location>
    <ligand>
        <name>dUMP</name>
        <dbReference type="ChEBI" id="CHEBI:246422"/>
    </ligand>
</feature>
<feature type="binding site" evidence="1">
    <location>
        <position position="138"/>
    </location>
    <ligand>
        <name>dUMP</name>
        <dbReference type="ChEBI" id="CHEBI:246422"/>
    </ligand>
</feature>
<feature type="binding site" evidence="1">
    <location>
        <position position="139"/>
    </location>
    <ligand>
        <name>dUMP</name>
        <dbReference type="ChEBI" id="CHEBI:246422"/>
    </ligand>
</feature>
<name>DUT_ENCCU</name>
<dbReference type="EC" id="3.6.1.23" evidence="1"/>
<dbReference type="EMBL" id="AL590446">
    <property type="protein sequence ID" value="CAD25403.1"/>
    <property type="molecule type" value="Genomic_DNA"/>
</dbReference>
<dbReference type="RefSeq" id="NP_585799.1">
    <property type="nucleotide sequence ID" value="NM_001041421.1"/>
</dbReference>
<dbReference type="SMR" id="Q8SRS0"/>
<dbReference type="FunCoup" id="Q8SRS0">
    <property type="interactions" value="369"/>
</dbReference>
<dbReference type="STRING" id="284813.Q8SRS0"/>
<dbReference type="GeneID" id="859223"/>
<dbReference type="KEGG" id="ecu:ECU06_0430"/>
<dbReference type="VEuPathDB" id="MicrosporidiaDB:ECU06_0430"/>
<dbReference type="HOGENOM" id="CLU_068508_3_0_1"/>
<dbReference type="InParanoid" id="Q8SRS0"/>
<dbReference type="OMA" id="HEGVIIN"/>
<dbReference type="OrthoDB" id="10261072at2759"/>
<dbReference type="UniPathway" id="UPA00610">
    <property type="reaction ID" value="UER00666"/>
</dbReference>
<dbReference type="Proteomes" id="UP000000819">
    <property type="component" value="Chromosome VI"/>
</dbReference>
<dbReference type="GO" id="GO:0004170">
    <property type="term" value="F:dUTP diphosphatase activity"/>
    <property type="evidence" value="ECO:0007669"/>
    <property type="project" value="UniProtKB-EC"/>
</dbReference>
<dbReference type="GO" id="GO:0000287">
    <property type="term" value="F:magnesium ion binding"/>
    <property type="evidence" value="ECO:0007669"/>
    <property type="project" value="InterPro"/>
</dbReference>
<dbReference type="GO" id="GO:0006226">
    <property type="term" value="P:dUMP biosynthetic process"/>
    <property type="evidence" value="ECO:0007669"/>
    <property type="project" value="UniProtKB-UniPathway"/>
</dbReference>
<dbReference type="GO" id="GO:0046081">
    <property type="term" value="P:dUTP catabolic process"/>
    <property type="evidence" value="ECO:0007669"/>
    <property type="project" value="InterPro"/>
</dbReference>
<dbReference type="CDD" id="cd07557">
    <property type="entry name" value="trimeric_dUTPase"/>
    <property type="match status" value="1"/>
</dbReference>
<dbReference type="Gene3D" id="2.70.40.10">
    <property type="match status" value="1"/>
</dbReference>
<dbReference type="InterPro" id="IPR008181">
    <property type="entry name" value="dUTPase"/>
</dbReference>
<dbReference type="InterPro" id="IPR029054">
    <property type="entry name" value="dUTPase-like"/>
</dbReference>
<dbReference type="InterPro" id="IPR036157">
    <property type="entry name" value="dUTPase-like_sf"/>
</dbReference>
<dbReference type="InterPro" id="IPR033704">
    <property type="entry name" value="dUTPase_trimeric"/>
</dbReference>
<dbReference type="NCBIfam" id="TIGR00576">
    <property type="entry name" value="dut"/>
    <property type="match status" value="1"/>
</dbReference>
<dbReference type="PANTHER" id="PTHR11241">
    <property type="entry name" value="DEOXYURIDINE 5'-TRIPHOSPHATE NUCLEOTIDOHYDROLASE"/>
    <property type="match status" value="1"/>
</dbReference>
<dbReference type="PANTHER" id="PTHR11241:SF0">
    <property type="entry name" value="DEOXYURIDINE 5'-TRIPHOSPHATE NUCLEOTIDOHYDROLASE"/>
    <property type="match status" value="1"/>
</dbReference>
<dbReference type="Pfam" id="PF00692">
    <property type="entry name" value="dUTPase"/>
    <property type="match status" value="1"/>
</dbReference>
<dbReference type="SUPFAM" id="SSF51283">
    <property type="entry name" value="dUTPase-like"/>
    <property type="match status" value="1"/>
</dbReference>
<gene>
    <name type="primary">DUT1</name>
    <name type="ordered locus">ECU06_0430</name>
</gene>
<reference key="1">
    <citation type="journal article" date="2001" name="Nature">
        <title>Genome sequence and gene compaction of the eukaryote parasite Encephalitozoon cuniculi.</title>
        <authorList>
            <person name="Katinka M.D."/>
            <person name="Duprat S."/>
            <person name="Cornillot E."/>
            <person name="Metenier G."/>
            <person name="Thomarat F."/>
            <person name="Prensier G."/>
            <person name="Barbe V."/>
            <person name="Peyretaillade E."/>
            <person name="Brottier P."/>
            <person name="Wincker P."/>
            <person name="Delbac F."/>
            <person name="El Alaoui H."/>
            <person name="Peyret P."/>
            <person name="Saurin W."/>
            <person name="Gouy M."/>
            <person name="Weissenbach J."/>
            <person name="Vivares C.P."/>
        </authorList>
    </citation>
    <scope>NUCLEOTIDE SEQUENCE [LARGE SCALE GENOMIC DNA]</scope>
    <source>
        <strain>GB-M1</strain>
    </source>
</reference>
<keyword id="KW-0378">Hydrolase</keyword>
<keyword id="KW-0460">Magnesium</keyword>
<keyword id="KW-0479">Metal-binding</keyword>
<keyword id="KW-0546">Nucleotide metabolism</keyword>
<keyword id="KW-1185">Reference proteome</keyword>
<accession>Q8SRS0</accession>
<sequence>MTVSEIRVRKINPRAKIPKRQSEGAAGYDIHSVESGRIPPNGRKSVRTGLAWDVPQSVVGLVFGRSGLALRNWIEVVETCVHPGEDKELVITLVNNGREVFEYEESSRIAQLVFVPVLSCEIDLVESLDLTERGCLGFGSTGMK</sequence>